<keyword id="KW-0997">Cell inner membrane</keyword>
<keyword id="KW-1003">Cell membrane</keyword>
<keyword id="KW-0350">Heme biosynthesis</keyword>
<keyword id="KW-0472">Membrane</keyword>
<keyword id="KW-1185">Reference proteome</keyword>
<keyword id="KW-0808">Transferase</keyword>
<keyword id="KW-0812">Transmembrane</keyword>
<keyword id="KW-1133">Transmembrane helix</keyword>
<accession>Q146A1</accession>
<reference key="1">
    <citation type="journal article" date="2006" name="Proc. Natl. Acad. Sci. U.S.A.">
        <title>Burkholderia xenovorans LB400 harbors a multi-replicon, 9.73-Mbp genome shaped for versatility.</title>
        <authorList>
            <person name="Chain P.S.G."/>
            <person name="Denef V.J."/>
            <person name="Konstantinidis K.T."/>
            <person name="Vergez L.M."/>
            <person name="Agullo L."/>
            <person name="Reyes V.L."/>
            <person name="Hauser L."/>
            <person name="Cordova M."/>
            <person name="Gomez L."/>
            <person name="Gonzalez M."/>
            <person name="Land M."/>
            <person name="Lao V."/>
            <person name="Larimer F."/>
            <person name="LiPuma J.J."/>
            <person name="Mahenthiralingam E."/>
            <person name="Malfatti S.A."/>
            <person name="Marx C.J."/>
            <person name="Parnell J.J."/>
            <person name="Ramette A."/>
            <person name="Richardson P."/>
            <person name="Seeger M."/>
            <person name="Smith D."/>
            <person name="Spilker T."/>
            <person name="Sul W.J."/>
            <person name="Tsoi T.V."/>
            <person name="Ulrich L.E."/>
            <person name="Zhulin I.B."/>
            <person name="Tiedje J.M."/>
        </authorList>
    </citation>
    <scope>NUCLEOTIDE SEQUENCE [LARGE SCALE GENOMIC DNA]</scope>
    <source>
        <strain>LB400</strain>
    </source>
</reference>
<comment type="function">
    <text evidence="1">Converts heme B (protoheme IX) to heme O by substitution of the vinyl group on carbon 2 of heme B porphyrin ring with a hydroxyethyl farnesyl side group.</text>
</comment>
<comment type="catalytic activity">
    <reaction evidence="1">
        <text>heme b + (2E,6E)-farnesyl diphosphate + H2O = Fe(II)-heme o + diphosphate</text>
        <dbReference type="Rhea" id="RHEA:28070"/>
        <dbReference type="ChEBI" id="CHEBI:15377"/>
        <dbReference type="ChEBI" id="CHEBI:33019"/>
        <dbReference type="ChEBI" id="CHEBI:60344"/>
        <dbReference type="ChEBI" id="CHEBI:60530"/>
        <dbReference type="ChEBI" id="CHEBI:175763"/>
        <dbReference type="EC" id="2.5.1.141"/>
    </reaction>
</comment>
<comment type="pathway">
    <text evidence="1">Porphyrin-containing compound metabolism; heme O biosynthesis; heme O from protoheme: step 1/1.</text>
</comment>
<comment type="subcellular location">
    <subcellularLocation>
        <location evidence="1">Cell inner membrane</location>
        <topology evidence="1">Multi-pass membrane protein</topology>
    </subcellularLocation>
</comment>
<comment type="miscellaneous">
    <text evidence="1">Carbon 2 of the heme B porphyrin ring is defined according to the Fischer nomenclature.</text>
</comment>
<comment type="similarity">
    <text evidence="1">Belongs to the UbiA prenyltransferase family. Protoheme IX farnesyltransferase subfamily.</text>
</comment>
<proteinExistence type="inferred from homology"/>
<sequence>MDSTTLSQTPGSRVSQYIALTKPRVTQLAVFCAVIGMFLSTPGMVPWTPLIGGTVGIWLLAGAAFAINCLVEQKIDAKMRRTSWRPSARGEITTAQILLFSAVLGGLGMWTLYTFANPLTMWLTLATFVGYAVIYTLLLKPATPQNIVIGGASGAMPPALGWAAVTGHVPGDAWILVLIIFVWTPPHFWALALYRRKDYENAGLPMLPNTHGEKYTRLHILLYTVILFAVTMMPFISGMSGVVYLAAAVLLGALFLAYAWKIYREYSDDLARKTFRYSIVYLSLLFAALLIDHYARVLIGA</sequence>
<evidence type="ECO:0000255" key="1">
    <source>
        <dbReference type="HAMAP-Rule" id="MF_00154"/>
    </source>
</evidence>
<protein>
    <recommendedName>
        <fullName evidence="1">Protoheme IX farnesyltransferase</fullName>
        <ecNumber evidence="1">2.5.1.141</ecNumber>
    </recommendedName>
    <alternativeName>
        <fullName evidence="1">Heme B farnesyltransferase</fullName>
    </alternativeName>
    <alternativeName>
        <fullName evidence="1">Heme O synthase</fullName>
    </alternativeName>
</protein>
<name>COXX_PARXL</name>
<gene>
    <name evidence="1" type="primary">ctaB</name>
    <name type="ordered locus">Bxeno_A0300</name>
    <name type="ORF">Bxe_A4162</name>
</gene>
<feature type="chain" id="PRO_0000327035" description="Protoheme IX farnesyltransferase">
    <location>
        <begin position="1"/>
        <end position="301"/>
    </location>
</feature>
<feature type="transmembrane region" description="Helical" evidence="1">
    <location>
        <begin position="25"/>
        <end position="45"/>
    </location>
</feature>
<feature type="transmembrane region" description="Helical" evidence="1">
    <location>
        <begin position="47"/>
        <end position="67"/>
    </location>
</feature>
<feature type="transmembrane region" description="Helical" evidence="1">
    <location>
        <begin position="97"/>
        <end position="117"/>
    </location>
</feature>
<feature type="transmembrane region" description="Helical" evidence="1">
    <location>
        <begin position="119"/>
        <end position="139"/>
    </location>
</feature>
<feature type="transmembrane region" description="Helical" evidence="1">
    <location>
        <begin position="147"/>
        <end position="167"/>
    </location>
</feature>
<feature type="transmembrane region" description="Helical" evidence="1">
    <location>
        <begin position="173"/>
        <end position="193"/>
    </location>
</feature>
<feature type="transmembrane region" description="Helical" evidence="1">
    <location>
        <begin position="235"/>
        <end position="255"/>
    </location>
</feature>
<feature type="transmembrane region" description="Helical" evidence="1">
    <location>
        <begin position="279"/>
        <end position="299"/>
    </location>
</feature>
<dbReference type="EC" id="2.5.1.141" evidence="1"/>
<dbReference type="EMBL" id="CP000270">
    <property type="protein sequence ID" value="ABE28838.1"/>
    <property type="molecule type" value="Genomic_DNA"/>
</dbReference>
<dbReference type="RefSeq" id="WP_011486672.1">
    <property type="nucleotide sequence ID" value="NC_007951.1"/>
</dbReference>
<dbReference type="SMR" id="Q146A1"/>
<dbReference type="STRING" id="266265.Bxe_A4162"/>
<dbReference type="KEGG" id="bxb:DR64_1839"/>
<dbReference type="KEGG" id="bxe:Bxe_A4162"/>
<dbReference type="PATRIC" id="fig|266265.5.peg.318"/>
<dbReference type="eggNOG" id="COG0109">
    <property type="taxonomic scope" value="Bacteria"/>
</dbReference>
<dbReference type="OrthoDB" id="9814417at2"/>
<dbReference type="UniPathway" id="UPA00834">
    <property type="reaction ID" value="UER00712"/>
</dbReference>
<dbReference type="Proteomes" id="UP000001817">
    <property type="component" value="Chromosome 1"/>
</dbReference>
<dbReference type="GO" id="GO:0005886">
    <property type="term" value="C:plasma membrane"/>
    <property type="evidence" value="ECO:0007669"/>
    <property type="project" value="UniProtKB-SubCell"/>
</dbReference>
<dbReference type="GO" id="GO:0008495">
    <property type="term" value="F:protoheme IX farnesyltransferase activity"/>
    <property type="evidence" value="ECO:0007669"/>
    <property type="project" value="UniProtKB-UniRule"/>
</dbReference>
<dbReference type="GO" id="GO:0048034">
    <property type="term" value="P:heme O biosynthetic process"/>
    <property type="evidence" value="ECO:0007669"/>
    <property type="project" value="UniProtKB-UniRule"/>
</dbReference>
<dbReference type="CDD" id="cd13957">
    <property type="entry name" value="PT_UbiA_Cox10"/>
    <property type="match status" value="1"/>
</dbReference>
<dbReference type="Gene3D" id="1.10.357.140">
    <property type="entry name" value="UbiA prenyltransferase"/>
    <property type="match status" value="1"/>
</dbReference>
<dbReference type="HAMAP" id="MF_00154">
    <property type="entry name" value="CyoE_CtaB"/>
    <property type="match status" value="1"/>
</dbReference>
<dbReference type="InterPro" id="IPR006369">
    <property type="entry name" value="Protohaem_IX_farnesylTrfase"/>
</dbReference>
<dbReference type="InterPro" id="IPR000537">
    <property type="entry name" value="UbiA_prenyltransferase"/>
</dbReference>
<dbReference type="InterPro" id="IPR030470">
    <property type="entry name" value="UbiA_prenylTrfase_CS"/>
</dbReference>
<dbReference type="InterPro" id="IPR044878">
    <property type="entry name" value="UbiA_sf"/>
</dbReference>
<dbReference type="NCBIfam" id="TIGR01473">
    <property type="entry name" value="cyoE_ctaB"/>
    <property type="match status" value="1"/>
</dbReference>
<dbReference type="NCBIfam" id="NF003349">
    <property type="entry name" value="PRK04375.1-2"/>
    <property type="match status" value="1"/>
</dbReference>
<dbReference type="PANTHER" id="PTHR43448:SF7">
    <property type="entry name" value="4-HYDROXYBENZOATE SOLANESYLTRANSFERASE"/>
    <property type="match status" value="1"/>
</dbReference>
<dbReference type="PANTHER" id="PTHR43448">
    <property type="entry name" value="PROTOHEME IX FARNESYLTRANSFERASE, MITOCHONDRIAL"/>
    <property type="match status" value="1"/>
</dbReference>
<dbReference type="Pfam" id="PF01040">
    <property type="entry name" value="UbiA"/>
    <property type="match status" value="1"/>
</dbReference>
<dbReference type="PROSITE" id="PS00943">
    <property type="entry name" value="UBIA"/>
    <property type="match status" value="1"/>
</dbReference>
<organism>
    <name type="scientific">Paraburkholderia xenovorans (strain LB400)</name>
    <dbReference type="NCBI Taxonomy" id="266265"/>
    <lineage>
        <taxon>Bacteria</taxon>
        <taxon>Pseudomonadati</taxon>
        <taxon>Pseudomonadota</taxon>
        <taxon>Betaproteobacteria</taxon>
        <taxon>Burkholderiales</taxon>
        <taxon>Burkholderiaceae</taxon>
        <taxon>Paraburkholderia</taxon>
    </lineage>
</organism>